<name>RS7_ACIET</name>
<comment type="function">
    <text evidence="1">One of the primary rRNA binding proteins, it binds directly to 16S rRNA where it nucleates assembly of the head domain of the 30S subunit. Is located at the subunit interface close to the decoding center, probably blocks exit of the E-site tRNA.</text>
</comment>
<comment type="subunit">
    <text evidence="1">Part of the 30S ribosomal subunit. Contacts proteins S9 and S11.</text>
</comment>
<comment type="similarity">
    <text evidence="1">Belongs to the universal ribosomal protein uS7 family.</text>
</comment>
<dbReference type="EMBL" id="CP001392">
    <property type="protein sequence ID" value="ACM31753.1"/>
    <property type="molecule type" value="Genomic_DNA"/>
</dbReference>
<dbReference type="RefSeq" id="WP_011803739.1">
    <property type="nucleotide sequence ID" value="NC_011992.1"/>
</dbReference>
<dbReference type="SMR" id="B9MB69"/>
<dbReference type="GeneID" id="84683216"/>
<dbReference type="KEGG" id="dia:Dtpsy_0269"/>
<dbReference type="eggNOG" id="COG0049">
    <property type="taxonomic scope" value="Bacteria"/>
</dbReference>
<dbReference type="HOGENOM" id="CLU_072226_1_1_4"/>
<dbReference type="Proteomes" id="UP000000450">
    <property type="component" value="Chromosome"/>
</dbReference>
<dbReference type="GO" id="GO:0015935">
    <property type="term" value="C:small ribosomal subunit"/>
    <property type="evidence" value="ECO:0007669"/>
    <property type="project" value="InterPro"/>
</dbReference>
<dbReference type="GO" id="GO:0019843">
    <property type="term" value="F:rRNA binding"/>
    <property type="evidence" value="ECO:0007669"/>
    <property type="project" value="UniProtKB-UniRule"/>
</dbReference>
<dbReference type="GO" id="GO:0003735">
    <property type="term" value="F:structural constituent of ribosome"/>
    <property type="evidence" value="ECO:0007669"/>
    <property type="project" value="InterPro"/>
</dbReference>
<dbReference type="GO" id="GO:0000049">
    <property type="term" value="F:tRNA binding"/>
    <property type="evidence" value="ECO:0007669"/>
    <property type="project" value="UniProtKB-UniRule"/>
</dbReference>
<dbReference type="GO" id="GO:0006412">
    <property type="term" value="P:translation"/>
    <property type="evidence" value="ECO:0007669"/>
    <property type="project" value="UniProtKB-UniRule"/>
</dbReference>
<dbReference type="CDD" id="cd14869">
    <property type="entry name" value="uS7_Bacteria"/>
    <property type="match status" value="1"/>
</dbReference>
<dbReference type="FunFam" id="1.10.455.10:FF:000001">
    <property type="entry name" value="30S ribosomal protein S7"/>
    <property type="match status" value="1"/>
</dbReference>
<dbReference type="Gene3D" id="1.10.455.10">
    <property type="entry name" value="Ribosomal protein S7 domain"/>
    <property type="match status" value="1"/>
</dbReference>
<dbReference type="HAMAP" id="MF_00480_B">
    <property type="entry name" value="Ribosomal_uS7_B"/>
    <property type="match status" value="1"/>
</dbReference>
<dbReference type="InterPro" id="IPR000235">
    <property type="entry name" value="Ribosomal_uS7"/>
</dbReference>
<dbReference type="InterPro" id="IPR005717">
    <property type="entry name" value="Ribosomal_uS7_bac/org-type"/>
</dbReference>
<dbReference type="InterPro" id="IPR020606">
    <property type="entry name" value="Ribosomal_uS7_CS"/>
</dbReference>
<dbReference type="InterPro" id="IPR023798">
    <property type="entry name" value="Ribosomal_uS7_dom"/>
</dbReference>
<dbReference type="InterPro" id="IPR036823">
    <property type="entry name" value="Ribosomal_uS7_dom_sf"/>
</dbReference>
<dbReference type="NCBIfam" id="TIGR01029">
    <property type="entry name" value="rpsG_bact"/>
    <property type="match status" value="1"/>
</dbReference>
<dbReference type="PANTHER" id="PTHR11205">
    <property type="entry name" value="RIBOSOMAL PROTEIN S7"/>
    <property type="match status" value="1"/>
</dbReference>
<dbReference type="Pfam" id="PF00177">
    <property type="entry name" value="Ribosomal_S7"/>
    <property type="match status" value="1"/>
</dbReference>
<dbReference type="PIRSF" id="PIRSF002122">
    <property type="entry name" value="RPS7p_RPS7a_RPS5e_RPS7o"/>
    <property type="match status" value="1"/>
</dbReference>
<dbReference type="SUPFAM" id="SSF47973">
    <property type="entry name" value="Ribosomal protein S7"/>
    <property type="match status" value="1"/>
</dbReference>
<dbReference type="PROSITE" id="PS00052">
    <property type="entry name" value="RIBOSOMAL_S7"/>
    <property type="match status" value="1"/>
</dbReference>
<accession>B9MB69</accession>
<protein>
    <recommendedName>
        <fullName evidence="1">Small ribosomal subunit protein uS7</fullName>
    </recommendedName>
    <alternativeName>
        <fullName evidence="2">30S ribosomal protein S7</fullName>
    </alternativeName>
</protein>
<proteinExistence type="inferred from homology"/>
<keyword id="KW-1185">Reference proteome</keyword>
<keyword id="KW-0687">Ribonucleoprotein</keyword>
<keyword id="KW-0689">Ribosomal protein</keyword>
<keyword id="KW-0694">RNA-binding</keyword>
<keyword id="KW-0699">rRNA-binding</keyword>
<keyword id="KW-0820">tRNA-binding</keyword>
<sequence length="157" mass="17975">MPRRREVPKREILPDPKFGNVELSKFMNVIMEGGKKAVAERIIYGALDLISQKQPEKDALEVFVTAINNVKPMVEVKSRRVGGANYQVPVEVRPVRRLALSMRWIKEAARKRGEKSMAQRLANELMEATEGRGGAMKRRDEVHRMAEANKAFSHFRF</sequence>
<gene>
    <name evidence="1" type="primary">rpsG</name>
    <name type="ordered locus">Dtpsy_0269</name>
</gene>
<feature type="chain" id="PRO_1000135601" description="Small ribosomal subunit protein uS7">
    <location>
        <begin position="1"/>
        <end position="157"/>
    </location>
</feature>
<evidence type="ECO:0000255" key="1">
    <source>
        <dbReference type="HAMAP-Rule" id="MF_00480"/>
    </source>
</evidence>
<evidence type="ECO:0000305" key="2"/>
<reference key="1">
    <citation type="submission" date="2009-01" db="EMBL/GenBank/DDBJ databases">
        <title>Complete sequence of Diaphorobacter sp. TPSY.</title>
        <authorList>
            <consortium name="US DOE Joint Genome Institute"/>
            <person name="Lucas S."/>
            <person name="Copeland A."/>
            <person name="Lapidus A."/>
            <person name="Glavina del Rio T."/>
            <person name="Tice H."/>
            <person name="Bruce D."/>
            <person name="Goodwin L."/>
            <person name="Pitluck S."/>
            <person name="Chertkov O."/>
            <person name="Brettin T."/>
            <person name="Detter J.C."/>
            <person name="Han C."/>
            <person name="Larimer F."/>
            <person name="Land M."/>
            <person name="Hauser L."/>
            <person name="Kyrpides N."/>
            <person name="Mikhailova N."/>
            <person name="Coates J.D."/>
        </authorList>
    </citation>
    <scope>NUCLEOTIDE SEQUENCE [LARGE SCALE GENOMIC DNA]</scope>
    <source>
        <strain>TPSY</strain>
    </source>
</reference>
<organism>
    <name type="scientific">Acidovorax ebreus (strain TPSY)</name>
    <name type="common">Diaphorobacter sp. (strain TPSY)</name>
    <dbReference type="NCBI Taxonomy" id="535289"/>
    <lineage>
        <taxon>Bacteria</taxon>
        <taxon>Pseudomonadati</taxon>
        <taxon>Pseudomonadota</taxon>
        <taxon>Betaproteobacteria</taxon>
        <taxon>Burkholderiales</taxon>
        <taxon>Comamonadaceae</taxon>
        <taxon>Diaphorobacter</taxon>
    </lineage>
</organism>